<comment type="function">
    <text evidence="1 2">Ca(2+) sensor involved in Ca(2+)-dependent exocytosis of secretory vesicles through Ca(2+) and phospholipid binding to the C2 domain. Ca(2+) induces binding of the C2-domains to phospholipid membranes and to assembled SNARE-complexes; both actions contribute to triggering exocytosis. Plays a role in dendrite formation by melanocytes.</text>
</comment>
<comment type="cofactor">
    <cofactor evidence="4">
        <name>Ca(2+)</name>
        <dbReference type="ChEBI" id="CHEBI:29108"/>
    </cofactor>
    <text evidence="1">Binds 3 Ca(2+) ions per subunit. The ions are bound to the C2 domains.</text>
</comment>
<comment type="subunit">
    <text evidence="6 7">Homodimer; disulfide-linked via the cysteine motif (PubMed:10531343). Can also form heterodimers with SYT6, SYT9 and SYT10 (PubMed:10531343, PubMed:10531344).</text>
</comment>
<comment type="interaction">
    <interactant intactId="EBI-457995">
        <id>O35681</id>
    </interactant>
    <interactant intactId="EBI-5239459">
        <id>Q9R0N4</id>
        <label>Syt10</label>
    </interactant>
    <organismsDiffer>false</organismsDiffer>
    <experiments>2</experiments>
</comment>
<comment type="interaction">
    <interactant intactId="EBI-457995">
        <id>O35681</id>
    </interactant>
    <interactant intactId="EBI-457995">
        <id>O35681</id>
        <label>Syt3</label>
    </interactant>
    <organismsDiffer>false</organismsDiffer>
    <experiments>4</experiments>
</comment>
<comment type="interaction">
    <interactant intactId="EBI-457995">
        <id>O35681</id>
    </interactant>
    <interactant intactId="EBI-5239378">
        <id>Q9R0N8</id>
        <label>Syt6</label>
    </interactant>
    <organismsDiffer>false</organismsDiffer>
    <experiments>2</experiments>
</comment>
<comment type="interaction">
    <interactant intactId="EBI-457995">
        <id>O35681</id>
    </interactant>
    <interactant intactId="EBI-458006">
        <id>Q9R0N9</id>
        <label>Syt9</label>
    </interactant>
    <organismsDiffer>false</organismsDiffer>
    <experiments>2</experiments>
</comment>
<comment type="subcellular location">
    <subcellularLocation>
        <location evidence="1">Cell membrane</location>
        <topology evidence="3">Single-pass membrane protein</topology>
    </subcellularLocation>
    <subcellularLocation>
        <location evidence="8">Cytoplasmic vesicle</location>
        <location evidence="8">Secretory vesicle membrane</location>
        <topology evidence="3">Single-pass membrane protein</topology>
    </subcellularLocation>
</comment>
<comment type="domain">
    <text evidence="6">The cysteine motif mediates homo- or heterodimer formation via formation of disulfide bonds.</text>
</comment>
<comment type="domain">
    <text evidence="1">The first C2 domain mediates Ca(2+)-dependent phospholipid binding.</text>
</comment>
<comment type="similarity">
    <text evidence="8">Belongs to the synaptotagmin family.</text>
</comment>
<gene>
    <name type="primary">Syt3</name>
</gene>
<dbReference type="EMBL" id="D45858">
    <property type="protein sequence ID" value="BAA08292.1"/>
    <property type="molecule type" value="mRNA"/>
</dbReference>
<dbReference type="EMBL" id="AB000893">
    <property type="protein sequence ID" value="BAA19204.1"/>
    <property type="molecule type" value="mRNA"/>
</dbReference>
<dbReference type="EMBL" id="BC051969">
    <property type="protein sequence ID" value="AAH51969.1"/>
    <property type="molecule type" value="mRNA"/>
</dbReference>
<dbReference type="CCDS" id="CCDS21205.1"/>
<dbReference type="RefSeq" id="NP_001107588.1">
    <property type="nucleotide sequence ID" value="NM_001114116.1"/>
</dbReference>
<dbReference type="RefSeq" id="NP_057872.3">
    <property type="nucleotide sequence ID" value="NM_016663.3"/>
</dbReference>
<dbReference type="SMR" id="O35681"/>
<dbReference type="BioGRID" id="203613">
    <property type="interactions" value="9"/>
</dbReference>
<dbReference type="FunCoup" id="O35681">
    <property type="interactions" value="319"/>
</dbReference>
<dbReference type="IntAct" id="O35681">
    <property type="interactions" value="7"/>
</dbReference>
<dbReference type="MINT" id="O35681"/>
<dbReference type="STRING" id="10090.ENSMUSP00000112432"/>
<dbReference type="GlyGen" id="O35681">
    <property type="glycosylation" value="1 site, 1 O-linked glycan (1 site)"/>
</dbReference>
<dbReference type="iPTMnet" id="O35681"/>
<dbReference type="PhosphoSitePlus" id="O35681"/>
<dbReference type="SwissPalm" id="O35681"/>
<dbReference type="PaxDb" id="10090-ENSMUSP00000112432"/>
<dbReference type="PeptideAtlas" id="O35681"/>
<dbReference type="ProteomicsDB" id="254798"/>
<dbReference type="ABCD" id="O35681">
    <property type="antibodies" value="1 sequenced antibody"/>
</dbReference>
<dbReference type="DNASU" id="20981"/>
<dbReference type="GeneID" id="20981"/>
<dbReference type="KEGG" id="mmu:20981"/>
<dbReference type="AGR" id="MGI:99665"/>
<dbReference type="CTD" id="84258"/>
<dbReference type="MGI" id="MGI:99665">
    <property type="gene designation" value="Syt3"/>
</dbReference>
<dbReference type="eggNOG" id="KOG1028">
    <property type="taxonomic scope" value="Eukaryota"/>
</dbReference>
<dbReference type="InParanoid" id="O35681"/>
<dbReference type="OrthoDB" id="67700at2759"/>
<dbReference type="PhylomeDB" id="O35681"/>
<dbReference type="BioGRID-ORCS" id="20981">
    <property type="hits" value="2 hits in 76 CRISPR screens"/>
</dbReference>
<dbReference type="CD-CODE" id="CE726F99">
    <property type="entry name" value="Postsynaptic density"/>
</dbReference>
<dbReference type="ChiTaRS" id="Syt3">
    <property type="organism name" value="mouse"/>
</dbReference>
<dbReference type="PRO" id="PR:O35681"/>
<dbReference type="Proteomes" id="UP000000589">
    <property type="component" value="Unplaced"/>
</dbReference>
<dbReference type="RNAct" id="O35681">
    <property type="molecule type" value="protein"/>
</dbReference>
<dbReference type="GO" id="GO:0005886">
    <property type="term" value="C:plasma membrane"/>
    <property type="evidence" value="ECO:0007669"/>
    <property type="project" value="UniProtKB-SubCell"/>
</dbReference>
<dbReference type="GO" id="GO:0098794">
    <property type="term" value="C:postsynapse"/>
    <property type="evidence" value="ECO:0000314"/>
    <property type="project" value="SynGO"/>
</dbReference>
<dbReference type="GO" id="GO:0030658">
    <property type="term" value="C:transport vesicle membrane"/>
    <property type="evidence" value="ECO:0007669"/>
    <property type="project" value="UniProtKB-SubCell"/>
</dbReference>
<dbReference type="GO" id="GO:0005544">
    <property type="term" value="F:calcium-dependent phospholipid binding"/>
    <property type="evidence" value="ECO:0000314"/>
    <property type="project" value="ParkinsonsUK-UCL"/>
</dbReference>
<dbReference type="GO" id="GO:0042802">
    <property type="term" value="F:identical protein binding"/>
    <property type="evidence" value="ECO:0000353"/>
    <property type="project" value="IntAct"/>
</dbReference>
<dbReference type="GO" id="GO:0046872">
    <property type="term" value="F:metal ion binding"/>
    <property type="evidence" value="ECO:0007669"/>
    <property type="project" value="UniProtKB-KW"/>
</dbReference>
<dbReference type="GO" id="GO:0046982">
    <property type="term" value="F:protein heterodimerization activity"/>
    <property type="evidence" value="ECO:0000353"/>
    <property type="project" value="UniProtKB"/>
</dbReference>
<dbReference type="GO" id="GO:0042803">
    <property type="term" value="F:protein homodimerization activity"/>
    <property type="evidence" value="ECO:0000314"/>
    <property type="project" value="BHF-UCL"/>
</dbReference>
<dbReference type="GO" id="GO:0030154">
    <property type="term" value="P:cell differentiation"/>
    <property type="evidence" value="ECO:0007669"/>
    <property type="project" value="UniProtKB-KW"/>
</dbReference>
<dbReference type="GO" id="GO:0006887">
    <property type="term" value="P:exocytosis"/>
    <property type="evidence" value="ECO:0007669"/>
    <property type="project" value="UniProtKB-KW"/>
</dbReference>
<dbReference type="GO" id="GO:0099072">
    <property type="term" value="P:regulation of postsynaptic membrane neurotransmitter receptor levels"/>
    <property type="evidence" value="ECO:0000314"/>
    <property type="project" value="SynGO"/>
</dbReference>
<dbReference type="CDD" id="cd08385">
    <property type="entry name" value="C2A_Synaptotagmin-1-5-6-9-10"/>
    <property type="match status" value="1"/>
</dbReference>
<dbReference type="CDD" id="cd08403">
    <property type="entry name" value="C2B_Synaptotagmin-3-5-6-9-10"/>
    <property type="match status" value="1"/>
</dbReference>
<dbReference type="FunFam" id="2.60.40.150:FF:000005">
    <property type="entry name" value="Synaptotagmin 6"/>
    <property type="match status" value="1"/>
</dbReference>
<dbReference type="FunFam" id="2.60.40.150:FF:000011">
    <property type="entry name" value="Synaptotagmin 6"/>
    <property type="match status" value="1"/>
</dbReference>
<dbReference type="Gene3D" id="2.60.40.150">
    <property type="entry name" value="C2 domain"/>
    <property type="match status" value="2"/>
</dbReference>
<dbReference type="InterPro" id="IPR000008">
    <property type="entry name" value="C2_dom"/>
</dbReference>
<dbReference type="InterPro" id="IPR035892">
    <property type="entry name" value="C2_domain_sf"/>
</dbReference>
<dbReference type="InterPro" id="IPR001565">
    <property type="entry name" value="Synaptotagmin"/>
</dbReference>
<dbReference type="PANTHER" id="PTHR10024">
    <property type="entry name" value="SYNAPTOTAGMIN"/>
    <property type="match status" value="1"/>
</dbReference>
<dbReference type="PANTHER" id="PTHR10024:SF176">
    <property type="entry name" value="SYNAPTOTAGMIN-3"/>
    <property type="match status" value="1"/>
</dbReference>
<dbReference type="Pfam" id="PF00168">
    <property type="entry name" value="C2"/>
    <property type="match status" value="2"/>
</dbReference>
<dbReference type="PRINTS" id="PR00360">
    <property type="entry name" value="C2DOMAIN"/>
</dbReference>
<dbReference type="PRINTS" id="PR00399">
    <property type="entry name" value="SYNAPTOTAGMN"/>
</dbReference>
<dbReference type="SMART" id="SM00239">
    <property type="entry name" value="C2"/>
    <property type="match status" value="2"/>
</dbReference>
<dbReference type="SUPFAM" id="SSF49562">
    <property type="entry name" value="C2 domain (Calcium/lipid-binding domain, CaLB)"/>
    <property type="match status" value="2"/>
</dbReference>
<dbReference type="PROSITE" id="PS50004">
    <property type="entry name" value="C2"/>
    <property type="match status" value="2"/>
</dbReference>
<accession>O35681</accession>
<accession>P97791</accession>
<accession>Q80WV1</accession>
<organism>
    <name type="scientific">Mus musculus</name>
    <name type="common">Mouse</name>
    <dbReference type="NCBI Taxonomy" id="10090"/>
    <lineage>
        <taxon>Eukaryota</taxon>
        <taxon>Metazoa</taxon>
        <taxon>Chordata</taxon>
        <taxon>Craniata</taxon>
        <taxon>Vertebrata</taxon>
        <taxon>Euteleostomi</taxon>
        <taxon>Mammalia</taxon>
        <taxon>Eutheria</taxon>
        <taxon>Euarchontoglires</taxon>
        <taxon>Glires</taxon>
        <taxon>Rodentia</taxon>
        <taxon>Myomorpha</taxon>
        <taxon>Muroidea</taxon>
        <taxon>Muridae</taxon>
        <taxon>Murinae</taxon>
        <taxon>Mus</taxon>
        <taxon>Mus</taxon>
    </lineage>
</organism>
<evidence type="ECO:0000250" key="1">
    <source>
        <dbReference type="UniProtKB" id="P40748"/>
    </source>
</evidence>
<evidence type="ECO:0000250" key="2">
    <source>
        <dbReference type="UniProtKB" id="Q9BQG1"/>
    </source>
</evidence>
<evidence type="ECO:0000255" key="3"/>
<evidence type="ECO:0000255" key="4">
    <source>
        <dbReference type="PROSITE-ProRule" id="PRU00041"/>
    </source>
</evidence>
<evidence type="ECO:0000256" key="5">
    <source>
        <dbReference type="SAM" id="MobiDB-lite"/>
    </source>
</evidence>
<evidence type="ECO:0000269" key="6">
    <source>
    </source>
</evidence>
<evidence type="ECO:0000269" key="7">
    <source>
    </source>
</evidence>
<evidence type="ECO:0000305" key="8"/>
<evidence type="ECO:0007744" key="9">
    <source>
    </source>
</evidence>
<protein>
    <recommendedName>
        <fullName>Synaptotagmin-3</fullName>
    </recommendedName>
    <alternativeName>
        <fullName>Synaptotagmin III</fullName>
        <shortName>SytIII</shortName>
    </alternativeName>
</protein>
<name>SYT3_MOUSE</name>
<keyword id="KW-0106">Calcium</keyword>
<keyword id="KW-1003">Cell membrane</keyword>
<keyword id="KW-0968">Cytoplasmic vesicle</keyword>
<keyword id="KW-0221">Differentiation</keyword>
<keyword id="KW-1015">Disulfide bond</keyword>
<keyword id="KW-0268">Exocytosis</keyword>
<keyword id="KW-0472">Membrane</keyword>
<keyword id="KW-0479">Metal-binding</keyword>
<keyword id="KW-0488">Methylation</keyword>
<keyword id="KW-1185">Reference proteome</keyword>
<keyword id="KW-0677">Repeat</keyword>
<keyword id="KW-0812">Transmembrane</keyword>
<keyword id="KW-1133">Transmembrane helix</keyword>
<feature type="chain" id="PRO_0000183946" description="Synaptotagmin-3">
    <location>
        <begin position="1"/>
        <end position="587"/>
    </location>
</feature>
<feature type="topological domain" description="Vesicular" evidence="3">
    <location>
        <begin position="1"/>
        <end position="54"/>
    </location>
</feature>
<feature type="transmembrane region" description="Helical" evidence="3">
    <location>
        <begin position="55"/>
        <end position="75"/>
    </location>
</feature>
<feature type="topological domain" description="Cytoplasmic" evidence="3">
    <location>
        <begin position="76"/>
        <end position="587"/>
    </location>
</feature>
<feature type="domain" description="C2 1" evidence="4">
    <location>
        <begin position="296"/>
        <end position="417"/>
    </location>
</feature>
<feature type="domain" description="C2 2" evidence="4">
    <location>
        <begin position="428"/>
        <end position="562"/>
    </location>
</feature>
<feature type="region of interest" description="Cysteine motif" evidence="6">
    <location>
        <begin position="10"/>
        <end position="34"/>
    </location>
</feature>
<feature type="region of interest" description="Disordered" evidence="5">
    <location>
        <begin position="183"/>
        <end position="258"/>
    </location>
</feature>
<feature type="compositionally biased region" description="Low complexity" evidence="5">
    <location>
        <begin position="183"/>
        <end position="205"/>
    </location>
</feature>
<feature type="compositionally biased region" description="Polar residues" evidence="5">
    <location>
        <begin position="213"/>
        <end position="224"/>
    </location>
</feature>
<feature type="compositionally biased region" description="Low complexity" evidence="5">
    <location>
        <begin position="229"/>
        <end position="244"/>
    </location>
</feature>
<feature type="binding site" evidence="4">
    <location>
        <position position="327"/>
    </location>
    <ligand>
        <name>Ca(2+)</name>
        <dbReference type="ChEBI" id="CHEBI:29108"/>
        <label>1</label>
    </ligand>
</feature>
<feature type="binding site" evidence="4">
    <location>
        <position position="327"/>
    </location>
    <ligand>
        <name>Ca(2+)</name>
        <dbReference type="ChEBI" id="CHEBI:29108"/>
        <label>2</label>
    </ligand>
</feature>
<feature type="binding site" evidence="4">
    <location>
        <position position="333"/>
    </location>
    <ligand>
        <name>Ca(2+)</name>
        <dbReference type="ChEBI" id="CHEBI:29108"/>
        <label>1</label>
    </ligand>
</feature>
<feature type="binding site" evidence="4">
    <location>
        <position position="385"/>
    </location>
    <ligand>
        <name>Ca(2+)</name>
        <dbReference type="ChEBI" id="CHEBI:29108"/>
        <label>1</label>
    </ligand>
</feature>
<feature type="binding site" evidence="4">
    <location>
        <position position="385"/>
    </location>
    <ligand>
        <name>Ca(2+)</name>
        <dbReference type="ChEBI" id="CHEBI:29108"/>
        <label>2</label>
    </ligand>
</feature>
<feature type="binding site" evidence="4">
    <location>
        <position position="386"/>
    </location>
    <ligand>
        <name>Ca(2+)</name>
        <dbReference type="ChEBI" id="CHEBI:29108"/>
        <label>1</label>
    </ligand>
</feature>
<feature type="binding site" evidence="4">
    <location>
        <position position="387"/>
    </location>
    <ligand>
        <name>Ca(2+)</name>
        <dbReference type="ChEBI" id="CHEBI:29108"/>
        <label>1</label>
    </ligand>
</feature>
<feature type="binding site" evidence="4">
    <location>
        <position position="387"/>
    </location>
    <ligand>
        <name>Ca(2+)</name>
        <dbReference type="ChEBI" id="CHEBI:29108"/>
        <label>2</label>
    </ligand>
</feature>
<feature type="binding site" evidence="4">
    <location>
        <position position="387"/>
    </location>
    <ligand>
        <name>Ca(2+)</name>
        <dbReference type="ChEBI" id="CHEBI:29108"/>
        <label>3</label>
    </ligand>
</feature>
<feature type="binding site" evidence="4">
    <location>
        <position position="390"/>
    </location>
    <ligand>
        <name>Ca(2+)</name>
        <dbReference type="ChEBI" id="CHEBI:29108"/>
        <label>3</label>
    </ligand>
</feature>
<feature type="binding site" evidence="4">
    <location>
        <position position="393"/>
    </location>
    <ligand>
        <name>Ca(2+)</name>
        <dbReference type="ChEBI" id="CHEBI:29108"/>
        <label>2</label>
    </ligand>
</feature>
<feature type="binding site" evidence="4">
    <location>
        <position position="393"/>
    </location>
    <ligand>
        <name>Ca(2+)</name>
        <dbReference type="ChEBI" id="CHEBI:29108"/>
        <label>3</label>
    </ligand>
</feature>
<feature type="binding site" evidence="4">
    <location>
        <position position="459"/>
    </location>
    <ligand>
        <name>Ca(2+)</name>
        <dbReference type="ChEBI" id="CHEBI:29108"/>
        <label>4</label>
    </ligand>
</feature>
<feature type="binding site" evidence="4">
    <location>
        <position position="465"/>
    </location>
    <ligand>
        <name>Ca(2+)</name>
        <dbReference type="ChEBI" id="CHEBI:29108"/>
        <label>4</label>
    </ligand>
</feature>
<feature type="binding site" evidence="4">
    <location>
        <position position="519"/>
    </location>
    <ligand>
        <name>Ca(2+)</name>
        <dbReference type="ChEBI" id="CHEBI:29108"/>
        <label>4</label>
    </ligand>
</feature>
<feature type="binding site" evidence="4">
    <location>
        <position position="521"/>
    </location>
    <ligand>
        <name>Ca(2+)</name>
        <dbReference type="ChEBI" id="CHEBI:29108"/>
        <label>4</label>
    </ligand>
</feature>
<feature type="modified residue" description="Omega-N-methylarginine" evidence="9">
    <location>
        <position position="286"/>
    </location>
</feature>
<feature type="mutagenesis site" description="Abolishes disulfide-dependent homodimerization. Abolishes disulfide-dependent homodimerization; when associated with A-21." evidence="6">
    <original>C</original>
    <variation>A</variation>
    <location>
        <position position="10"/>
    </location>
</feature>
<feature type="mutagenesis site" description="Abolishes disulfide-dependent homodimerization; when associated with A-10. Does not affect disulfide-dependent homodimerization; when associated with A-33." evidence="6">
    <original>C</original>
    <variation>A</variation>
    <location>
        <position position="21"/>
    </location>
</feature>
<feature type="mutagenesis site" description="Does not affect disulfide-dependent homodimerization; when associated with A-21." evidence="6">
    <original>C</original>
    <variation>A</variation>
    <location>
        <position position="33"/>
    </location>
</feature>
<feature type="sequence conflict" description="In Ref. 1; BAA08292." evidence="8" ref="1">
    <original>V</original>
    <variation>L</variation>
    <location>
        <position position="111"/>
    </location>
</feature>
<feature type="sequence conflict" description="In Ref. 1; BAA08292." evidence="8" ref="1">
    <original>P</original>
    <variation>A</variation>
    <location>
        <position position="232"/>
    </location>
</feature>
<feature type="sequence conflict" description="In Ref. 1; BAA08292/BAA19204." evidence="8" ref="1">
    <original>H</original>
    <variation>Q</variation>
    <location>
        <position position="312"/>
    </location>
</feature>
<proteinExistence type="evidence at protein level"/>
<sequence>MSGDYEDDLCRRALILVSDLCARVRDADTNDRCQEFNELRIRGYPRGPDADISVSLLSVIVTFCGIVLLGVSLFVSWKLCWVPWRDKGGSAVGGGPLRKDLAPGVGLAGLVGGGGHHLGASLGGHPLLGGPHHHGHTAHHPPFAELLEPGGLGGSEPPEPSYLDMDSYPEAAVASVVAAGVKPSQTSPELPSEGGTGSGLLLLPPSGGGLPSAQSHQQVTSLAPTTRYPALPRPLTQQTLTTQADPSTEERPPALPLPLPGGEEKAKLIGQIKPELYQGTGPGGRRGGGSGEAGAPCGRISFALRYLYGSDHLVVRILQALDLPAKDSNGFSDPYVKIYLLPDRKKKFQTKVHRKTLNPIFNETFQFSVPLAELAQRKLHFSVYDFDRFSRHDLIGQVVLDNLLELAEQPPDRPLWRDILEGGSEKADLGELNFSLCYLPTAGRLTVTIIKASNLKAMDLTGFSDPYVKASLISEGRRLKKRKTSIKKNTLNPTYNEALVFDVAPESVENVGLSIAVVDYDCIGHNEVIGVCRVGPEAADPHGREHWAEMLANPRKPVEHWHQLVEEKTLSSFTKGGKGLSEKENSE</sequence>
<reference key="1">
    <citation type="submission" date="1995-02" db="EMBL/GenBank/DDBJ databases">
        <authorList>
            <person name="Kataoka M."/>
        </authorList>
    </citation>
    <scope>NUCLEOTIDE SEQUENCE [MRNA]</scope>
    <source>
        <strain>BALB/cJ</strain>
        <tissue>Brain</tissue>
    </source>
</reference>
<reference key="2">
    <citation type="journal article" date="1999" name="J. Biol. Chem.">
        <title>Conserved N-terminal cysteine motif is essential for homo- and heterodimer formation of synaptotagmins III, V, VI, and X.</title>
        <authorList>
            <person name="Fukuda M."/>
            <person name="Kanno E."/>
            <person name="Mikoshiba K."/>
        </authorList>
    </citation>
    <scope>NUCLEOTIDE SEQUENCE [MRNA]</scope>
    <scope>CYSTEINE MOTIF</scope>
    <scope>SUBUNIT</scope>
    <scope>DISULFIDE BOND</scope>
    <scope>MUTAGENESIS OF CYS-10; CYS-21 AND CYS-33</scope>
    <source>
        <strain>ICR</strain>
    </source>
</reference>
<reference key="3">
    <citation type="journal article" date="2004" name="Genome Res.">
        <title>The status, quality, and expansion of the NIH full-length cDNA project: the Mammalian Gene Collection (MGC).</title>
        <authorList>
            <consortium name="The MGC Project Team"/>
        </authorList>
    </citation>
    <scope>NUCLEOTIDE SEQUENCE [LARGE SCALE MRNA]</scope>
    <source>
        <strain>C57BL/6J</strain>
        <tissue>Brain</tissue>
    </source>
</reference>
<reference key="4">
    <citation type="journal article" date="1999" name="J. Biol. Chem.">
        <title>A novel alternatively spliced variant of synaptotagmin VI lacking a transmembrane domain. Implications for distinct functions of the two isoforms.</title>
        <authorList>
            <person name="Fukuda M."/>
            <person name="Mikoshiba K."/>
        </authorList>
    </citation>
    <scope>SUBUNIT</scope>
    <source>
        <strain>ICR</strain>
        <tissue>Cerebellum</tissue>
    </source>
</reference>
<reference key="5">
    <citation type="journal article" date="2014" name="Mol. Cell. Proteomics">
        <title>Immunoaffinity enrichment and mass spectrometry analysis of protein methylation.</title>
        <authorList>
            <person name="Guo A."/>
            <person name="Gu H."/>
            <person name="Zhou J."/>
            <person name="Mulhern D."/>
            <person name="Wang Y."/>
            <person name="Lee K.A."/>
            <person name="Yang V."/>
            <person name="Aguiar M."/>
            <person name="Kornhauser J."/>
            <person name="Jia X."/>
            <person name="Ren J."/>
            <person name="Beausoleil S.A."/>
            <person name="Silva J.C."/>
            <person name="Vemulapalli V."/>
            <person name="Bedford M.T."/>
            <person name="Comb M.J."/>
        </authorList>
    </citation>
    <scope>METHYLATION [LARGE SCALE ANALYSIS] AT ARG-286</scope>
    <scope>IDENTIFICATION BY MASS SPECTROMETRY [LARGE SCALE ANALYSIS]</scope>
    <source>
        <tissue>Brain</tissue>
    </source>
</reference>